<organism>
    <name type="scientific">Oceanobacillus iheyensis (strain DSM 14371 / CIP 107618 / JCM 11309 / KCTC 3954 / HTE831)</name>
    <dbReference type="NCBI Taxonomy" id="221109"/>
    <lineage>
        <taxon>Bacteria</taxon>
        <taxon>Bacillati</taxon>
        <taxon>Bacillota</taxon>
        <taxon>Bacilli</taxon>
        <taxon>Bacillales</taxon>
        <taxon>Bacillaceae</taxon>
        <taxon>Oceanobacillus</taxon>
    </lineage>
</organism>
<feature type="chain" id="PRO_0000198153" description="Ribosomal RNA large subunit methyltransferase H">
    <location>
        <begin position="1"/>
        <end position="159"/>
    </location>
</feature>
<feature type="binding site" evidence="1">
    <location>
        <position position="76"/>
    </location>
    <ligand>
        <name>S-adenosyl-L-methionine</name>
        <dbReference type="ChEBI" id="CHEBI:59789"/>
    </ligand>
</feature>
<feature type="binding site" evidence="1">
    <location>
        <position position="108"/>
    </location>
    <ligand>
        <name>S-adenosyl-L-methionine</name>
        <dbReference type="ChEBI" id="CHEBI:59789"/>
    </ligand>
</feature>
<feature type="binding site" evidence="1">
    <location>
        <begin position="127"/>
        <end position="132"/>
    </location>
    <ligand>
        <name>S-adenosyl-L-methionine</name>
        <dbReference type="ChEBI" id="CHEBI:59789"/>
    </ligand>
</feature>
<sequence length="159" mass="18040">MNITIVSVGKLKEKYLKQGIDEYKKRLNAYAKVSIIEVADEKAPETMSEAEMKEVKRKEGERILSSIAPDAFVITLEIEGKMLGSEQLAKKLDELATYGKSKVVFVIGGSLGISQDVQRRSDLALSFSKMTFPHQLMRLVLIEQVYRSFRINRGEPYHK</sequence>
<proteinExistence type="inferred from homology"/>
<name>RLMH_OCEIH</name>
<reference key="1">
    <citation type="journal article" date="2002" name="Nucleic Acids Res.">
        <title>Genome sequence of Oceanobacillus iheyensis isolated from the Iheya Ridge and its unexpected adaptive capabilities to extreme environments.</title>
        <authorList>
            <person name="Takami H."/>
            <person name="Takaki Y."/>
            <person name="Uchiyama I."/>
        </authorList>
    </citation>
    <scope>NUCLEOTIDE SEQUENCE [LARGE SCALE GENOMIC DNA]</scope>
    <source>
        <strain>DSM 14371 / CIP 107618 / JCM 11309 / KCTC 3954 / HTE831</strain>
    </source>
</reference>
<keyword id="KW-0963">Cytoplasm</keyword>
<keyword id="KW-0489">Methyltransferase</keyword>
<keyword id="KW-1185">Reference proteome</keyword>
<keyword id="KW-0698">rRNA processing</keyword>
<keyword id="KW-0949">S-adenosyl-L-methionine</keyword>
<keyword id="KW-0808">Transferase</keyword>
<comment type="function">
    <text evidence="1">Specifically methylates the pseudouridine at position 1915 (m3Psi1915) in 23S rRNA.</text>
</comment>
<comment type="catalytic activity">
    <reaction evidence="1">
        <text>pseudouridine(1915) in 23S rRNA + S-adenosyl-L-methionine = N(3)-methylpseudouridine(1915) in 23S rRNA + S-adenosyl-L-homocysteine + H(+)</text>
        <dbReference type="Rhea" id="RHEA:42752"/>
        <dbReference type="Rhea" id="RHEA-COMP:10221"/>
        <dbReference type="Rhea" id="RHEA-COMP:10222"/>
        <dbReference type="ChEBI" id="CHEBI:15378"/>
        <dbReference type="ChEBI" id="CHEBI:57856"/>
        <dbReference type="ChEBI" id="CHEBI:59789"/>
        <dbReference type="ChEBI" id="CHEBI:65314"/>
        <dbReference type="ChEBI" id="CHEBI:74486"/>
        <dbReference type="EC" id="2.1.1.177"/>
    </reaction>
</comment>
<comment type="subunit">
    <text evidence="1">Homodimer.</text>
</comment>
<comment type="subcellular location">
    <subcellularLocation>
        <location evidence="1">Cytoplasm</location>
    </subcellularLocation>
</comment>
<comment type="similarity">
    <text evidence="1">Belongs to the RNA methyltransferase RlmH family.</text>
</comment>
<gene>
    <name evidence="1" type="primary">rlmH</name>
    <name type="ordered locus">OB3379</name>
</gene>
<accession>Q8EL52</accession>
<evidence type="ECO:0000255" key="1">
    <source>
        <dbReference type="HAMAP-Rule" id="MF_00658"/>
    </source>
</evidence>
<protein>
    <recommendedName>
        <fullName evidence="1">Ribosomal RNA large subunit methyltransferase H</fullName>
        <ecNumber evidence="1">2.1.1.177</ecNumber>
    </recommendedName>
    <alternativeName>
        <fullName evidence="1">23S rRNA (pseudouridine1915-N3)-methyltransferase</fullName>
    </alternativeName>
    <alternativeName>
        <fullName evidence="1">23S rRNA m3Psi1915 methyltransferase</fullName>
    </alternativeName>
    <alternativeName>
        <fullName evidence="1">rRNA (pseudouridine-N3-)-methyltransferase RlmH</fullName>
    </alternativeName>
</protein>
<dbReference type="EC" id="2.1.1.177" evidence="1"/>
<dbReference type="EMBL" id="BA000028">
    <property type="protein sequence ID" value="BAC15335.1"/>
    <property type="molecule type" value="Genomic_DNA"/>
</dbReference>
<dbReference type="RefSeq" id="WP_011067777.1">
    <property type="nucleotide sequence ID" value="NC_004193.1"/>
</dbReference>
<dbReference type="SMR" id="Q8EL52"/>
<dbReference type="STRING" id="221109.gene:10735631"/>
<dbReference type="KEGG" id="oih:OB3379"/>
<dbReference type="eggNOG" id="COG1576">
    <property type="taxonomic scope" value="Bacteria"/>
</dbReference>
<dbReference type="HOGENOM" id="CLU_100552_0_0_9"/>
<dbReference type="OrthoDB" id="9806643at2"/>
<dbReference type="PhylomeDB" id="Q8EL52"/>
<dbReference type="Proteomes" id="UP000000822">
    <property type="component" value="Chromosome"/>
</dbReference>
<dbReference type="GO" id="GO:0005737">
    <property type="term" value="C:cytoplasm"/>
    <property type="evidence" value="ECO:0007669"/>
    <property type="project" value="UniProtKB-SubCell"/>
</dbReference>
<dbReference type="GO" id="GO:0070038">
    <property type="term" value="F:rRNA (pseudouridine-N3-)-methyltransferase activity"/>
    <property type="evidence" value="ECO:0007669"/>
    <property type="project" value="UniProtKB-UniRule"/>
</dbReference>
<dbReference type="CDD" id="cd18081">
    <property type="entry name" value="RlmH-like"/>
    <property type="match status" value="1"/>
</dbReference>
<dbReference type="Gene3D" id="3.40.1280.10">
    <property type="match status" value="1"/>
</dbReference>
<dbReference type="HAMAP" id="MF_00658">
    <property type="entry name" value="23SrRNA_methyltr_H"/>
    <property type="match status" value="1"/>
</dbReference>
<dbReference type="InterPro" id="IPR029028">
    <property type="entry name" value="Alpha/beta_knot_MTases"/>
</dbReference>
<dbReference type="InterPro" id="IPR003742">
    <property type="entry name" value="RlmH-like"/>
</dbReference>
<dbReference type="InterPro" id="IPR029026">
    <property type="entry name" value="tRNA_m1G_MTases_N"/>
</dbReference>
<dbReference type="NCBIfam" id="NF000985">
    <property type="entry name" value="PRK00103.1-3"/>
    <property type="match status" value="1"/>
</dbReference>
<dbReference type="NCBIfam" id="TIGR00246">
    <property type="entry name" value="tRNA_RlmH_YbeA"/>
    <property type="match status" value="1"/>
</dbReference>
<dbReference type="PANTHER" id="PTHR33603">
    <property type="entry name" value="METHYLTRANSFERASE"/>
    <property type="match status" value="1"/>
</dbReference>
<dbReference type="PANTHER" id="PTHR33603:SF1">
    <property type="entry name" value="RIBOSOMAL RNA LARGE SUBUNIT METHYLTRANSFERASE H"/>
    <property type="match status" value="1"/>
</dbReference>
<dbReference type="Pfam" id="PF02590">
    <property type="entry name" value="SPOUT_MTase"/>
    <property type="match status" value="1"/>
</dbReference>
<dbReference type="PIRSF" id="PIRSF004505">
    <property type="entry name" value="MT_bac"/>
    <property type="match status" value="1"/>
</dbReference>
<dbReference type="SUPFAM" id="SSF75217">
    <property type="entry name" value="alpha/beta knot"/>
    <property type="match status" value="1"/>
</dbReference>